<keyword id="KW-0963">Cytoplasm</keyword>
<keyword id="KW-0378">Hydrolase</keyword>
<keyword id="KW-0539">Nucleus</keyword>
<accession>P0DXI8</accession>
<evidence type="ECO:0000250" key="1">
    <source>
        <dbReference type="UniProtKB" id="J9U5U9"/>
    </source>
</evidence>
<evidence type="ECO:0000250" key="2">
    <source>
        <dbReference type="UniProtKB" id="Q10QA5"/>
    </source>
</evidence>
<evidence type="ECO:0000269" key="3">
    <source>
    </source>
</evidence>
<evidence type="ECO:0000303" key="4">
    <source>
    </source>
</evidence>
<evidence type="ECO:0000305" key="5"/>
<dbReference type="EC" id="3.1.-.-" evidence="3"/>
<dbReference type="EMBL" id="OR700012">
    <property type="protein sequence ID" value="WVR18522.1"/>
    <property type="molecule type" value="mRNA"/>
</dbReference>
<dbReference type="GO" id="GO:0005737">
    <property type="term" value="C:cytoplasm"/>
    <property type="evidence" value="ECO:0000314"/>
    <property type="project" value="UniProtKB"/>
</dbReference>
<dbReference type="GO" id="GO:0005634">
    <property type="term" value="C:nucleus"/>
    <property type="evidence" value="ECO:0000314"/>
    <property type="project" value="UniProtKB"/>
</dbReference>
<dbReference type="GO" id="GO:0016787">
    <property type="term" value="F:hydrolase activity"/>
    <property type="evidence" value="ECO:0000314"/>
    <property type="project" value="UniProtKB"/>
</dbReference>
<dbReference type="FunFam" id="3.40.50.1820:FF:000042">
    <property type="entry name" value="probable strigolactone esterase DAD2"/>
    <property type="match status" value="1"/>
</dbReference>
<dbReference type="Gene3D" id="3.40.50.1820">
    <property type="entry name" value="alpha/beta hydrolase"/>
    <property type="match status" value="1"/>
</dbReference>
<dbReference type="InterPro" id="IPR000073">
    <property type="entry name" value="AB_hydrolase_1"/>
</dbReference>
<dbReference type="InterPro" id="IPR029058">
    <property type="entry name" value="AB_hydrolase_fold"/>
</dbReference>
<dbReference type="PANTHER" id="PTHR43039">
    <property type="entry name" value="ESTERASE-RELATED"/>
    <property type="match status" value="1"/>
</dbReference>
<dbReference type="Pfam" id="PF12697">
    <property type="entry name" value="Abhydrolase_6"/>
    <property type="match status" value="1"/>
</dbReference>
<dbReference type="SUPFAM" id="SSF53474">
    <property type="entry name" value="alpha/beta-Hydrolases"/>
    <property type="match status" value="1"/>
</dbReference>
<feature type="chain" id="PRO_0000461709" description="Karrikin insensitive 2 receptor CA">
    <location>
        <begin position="1"/>
        <end position="270"/>
    </location>
</feature>
<feature type="active site" description="Nucleophile" evidence="1">
    <location>
        <position position="95"/>
    </location>
</feature>
<feature type="active site" evidence="2">
    <location>
        <position position="217"/>
    </location>
</feature>
<feature type="active site" evidence="1">
    <location>
        <position position="246"/>
    </location>
</feature>
<sequence>MGIVEEAHNVKILGSGEQTVVLAHGFGTDQSVWKHLVPHLVDDYKVVIFDNMGAGTTNPDYFDFERYSTLEGYAYDVIAILEEFQVGSCIYVGHSVSAMIGVIASIARPDLFTKLVTVSASPRYLNDMDYYGGFEQEDLDQLYEAMRSNYKAWCSGFAPLVIGGDMDSVAIQEFSRTLFNMRPDIALSVLQMIFQSDLRHLLPHVSVPCHIIQSMKDLAVPVVVSEYLHQNLGGGSIVEVMSTEGHLPQLSSPDVVIPVLLRHIHHDIAI</sequence>
<protein>
    <recommendedName>
        <fullName evidence="4">Karrikin insensitive 2 receptor CA</fullName>
        <shortName evidence="4">PhKAI2ca</shortName>
        <ecNumber evidence="3">3.1.-.-</ecNumber>
    </recommendedName>
</protein>
<name>KI2CA_PETHY</name>
<gene>
    <name evidence="4" type="primary">KAI2CA</name>
</gene>
<proteinExistence type="evidence at transcript level"/>
<organism>
    <name type="scientific">Petunia hybrida</name>
    <name type="common">Petunia</name>
    <dbReference type="NCBI Taxonomy" id="4102"/>
    <lineage>
        <taxon>Eukaryota</taxon>
        <taxon>Viridiplantae</taxon>
        <taxon>Streptophyta</taxon>
        <taxon>Embryophyta</taxon>
        <taxon>Tracheophyta</taxon>
        <taxon>Spermatophyta</taxon>
        <taxon>Magnoliopsida</taxon>
        <taxon>eudicotyledons</taxon>
        <taxon>Gunneridae</taxon>
        <taxon>Pentapetalae</taxon>
        <taxon>asterids</taxon>
        <taxon>lamiids</taxon>
        <taxon>Solanales</taxon>
        <taxon>Solanaceae</taxon>
        <taxon>Petunioideae</taxon>
        <taxon>Petunia</taxon>
    </lineage>
</organism>
<reference key="1">
    <citation type="journal article" date="2024" name="Science">
        <title>Volatile communication in plants relies on a KAI2-mediated signaling pathway.</title>
        <authorList>
            <person name="Stirling S.A."/>
            <person name="Guercio A.M."/>
            <person name="Partrick R.M."/>
            <person name="Huang X.-Q."/>
            <person name="Bergman M.E."/>
            <person name="Dwivedi V."/>
            <person name="Kortbeek R.W.J."/>
            <person name="Liu Y.-K."/>
            <person name="Sun F."/>
            <person name="Tao W.A."/>
            <person name="Li Y."/>
            <person name="Boachon B."/>
            <person name="Shabek N."/>
            <person name="Dudareva N."/>
        </authorList>
    </citation>
    <scope>NUCLEOTIDE SEQUENCE [MRNA]</scope>
    <scope>FUNCTION</scope>
    <scope>TISSUE SPECIFICITY</scope>
    <scope>GENE FAMILY</scope>
    <scope>NOMENCLATURE</scope>
    <source>
        <strain>cv. Mitchell</strain>
    </source>
</reference>
<comment type="function">
    <text evidence="3">Hydrolase which may be involved in plant olfaction during volatile communication.</text>
</comment>
<comment type="subcellular location">
    <subcellularLocation>
        <location evidence="3">Nucleus</location>
    </subcellularLocation>
    <subcellularLocation>
        <location evidence="3">Cytoplasm</location>
    </subcellularLocation>
</comment>
<comment type="tissue specificity">
    <text evidence="3">Expressed in stigma.</text>
</comment>
<comment type="similarity">
    <text evidence="5">Belongs to the AB hydrolase superfamily.</text>
</comment>